<gene>
    <name evidence="1" type="primary">rplV</name>
    <name type="ordered locus">Dshi_0287</name>
</gene>
<protein>
    <recommendedName>
        <fullName evidence="1">Large ribosomal subunit protein uL22</fullName>
    </recommendedName>
    <alternativeName>
        <fullName evidence="2">50S ribosomal protein L22</fullName>
    </alternativeName>
</protein>
<evidence type="ECO:0000255" key="1">
    <source>
        <dbReference type="HAMAP-Rule" id="MF_01331"/>
    </source>
</evidence>
<evidence type="ECO:0000305" key="2"/>
<dbReference type="EMBL" id="CP000830">
    <property type="protein sequence ID" value="ABV92036.1"/>
    <property type="molecule type" value="Genomic_DNA"/>
</dbReference>
<dbReference type="RefSeq" id="WP_012176967.1">
    <property type="nucleotide sequence ID" value="NC_009952.1"/>
</dbReference>
<dbReference type="SMR" id="A8LM59"/>
<dbReference type="STRING" id="398580.Dshi_0287"/>
<dbReference type="KEGG" id="dsh:Dshi_0287"/>
<dbReference type="eggNOG" id="COG0091">
    <property type="taxonomic scope" value="Bacteria"/>
</dbReference>
<dbReference type="HOGENOM" id="CLU_083987_3_0_5"/>
<dbReference type="OrthoDB" id="9805969at2"/>
<dbReference type="Proteomes" id="UP000006833">
    <property type="component" value="Chromosome"/>
</dbReference>
<dbReference type="GO" id="GO:0022625">
    <property type="term" value="C:cytosolic large ribosomal subunit"/>
    <property type="evidence" value="ECO:0007669"/>
    <property type="project" value="TreeGrafter"/>
</dbReference>
<dbReference type="GO" id="GO:0019843">
    <property type="term" value="F:rRNA binding"/>
    <property type="evidence" value="ECO:0007669"/>
    <property type="project" value="UniProtKB-UniRule"/>
</dbReference>
<dbReference type="GO" id="GO:0003735">
    <property type="term" value="F:structural constituent of ribosome"/>
    <property type="evidence" value="ECO:0007669"/>
    <property type="project" value="InterPro"/>
</dbReference>
<dbReference type="GO" id="GO:0006412">
    <property type="term" value="P:translation"/>
    <property type="evidence" value="ECO:0007669"/>
    <property type="project" value="UniProtKB-UniRule"/>
</dbReference>
<dbReference type="CDD" id="cd00336">
    <property type="entry name" value="Ribosomal_L22"/>
    <property type="match status" value="1"/>
</dbReference>
<dbReference type="Gene3D" id="3.90.470.10">
    <property type="entry name" value="Ribosomal protein L22/L17"/>
    <property type="match status" value="1"/>
</dbReference>
<dbReference type="HAMAP" id="MF_01331_B">
    <property type="entry name" value="Ribosomal_uL22_B"/>
    <property type="match status" value="1"/>
</dbReference>
<dbReference type="InterPro" id="IPR001063">
    <property type="entry name" value="Ribosomal_uL22"/>
</dbReference>
<dbReference type="InterPro" id="IPR005727">
    <property type="entry name" value="Ribosomal_uL22_bac/chlpt-type"/>
</dbReference>
<dbReference type="InterPro" id="IPR047867">
    <property type="entry name" value="Ribosomal_uL22_bac/org-type"/>
</dbReference>
<dbReference type="InterPro" id="IPR036394">
    <property type="entry name" value="Ribosomal_uL22_sf"/>
</dbReference>
<dbReference type="NCBIfam" id="TIGR01044">
    <property type="entry name" value="rplV_bact"/>
    <property type="match status" value="1"/>
</dbReference>
<dbReference type="PANTHER" id="PTHR13501">
    <property type="entry name" value="CHLOROPLAST 50S RIBOSOMAL PROTEIN L22-RELATED"/>
    <property type="match status" value="1"/>
</dbReference>
<dbReference type="PANTHER" id="PTHR13501:SF8">
    <property type="entry name" value="LARGE RIBOSOMAL SUBUNIT PROTEIN UL22M"/>
    <property type="match status" value="1"/>
</dbReference>
<dbReference type="Pfam" id="PF00237">
    <property type="entry name" value="Ribosomal_L22"/>
    <property type="match status" value="1"/>
</dbReference>
<dbReference type="SUPFAM" id="SSF54843">
    <property type="entry name" value="Ribosomal protein L22"/>
    <property type="match status" value="1"/>
</dbReference>
<keyword id="KW-1185">Reference proteome</keyword>
<keyword id="KW-0687">Ribonucleoprotein</keyword>
<keyword id="KW-0689">Ribosomal protein</keyword>
<keyword id="KW-0694">RNA-binding</keyword>
<keyword id="KW-0699">rRNA-binding</keyword>
<accession>A8LM59</accession>
<reference key="1">
    <citation type="journal article" date="2010" name="ISME J.">
        <title>The complete genome sequence of the algal symbiont Dinoroseobacter shibae: a hitchhiker's guide to life in the sea.</title>
        <authorList>
            <person name="Wagner-Dobler I."/>
            <person name="Ballhausen B."/>
            <person name="Berger M."/>
            <person name="Brinkhoff T."/>
            <person name="Buchholz I."/>
            <person name="Bunk B."/>
            <person name="Cypionka H."/>
            <person name="Daniel R."/>
            <person name="Drepper T."/>
            <person name="Gerdts G."/>
            <person name="Hahnke S."/>
            <person name="Han C."/>
            <person name="Jahn D."/>
            <person name="Kalhoefer D."/>
            <person name="Kiss H."/>
            <person name="Klenk H.P."/>
            <person name="Kyrpides N."/>
            <person name="Liebl W."/>
            <person name="Liesegang H."/>
            <person name="Meincke L."/>
            <person name="Pati A."/>
            <person name="Petersen J."/>
            <person name="Piekarski T."/>
            <person name="Pommerenke C."/>
            <person name="Pradella S."/>
            <person name="Pukall R."/>
            <person name="Rabus R."/>
            <person name="Stackebrandt E."/>
            <person name="Thole S."/>
            <person name="Thompson L."/>
            <person name="Tielen P."/>
            <person name="Tomasch J."/>
            <person name="von Jan M."/>
            <person name="Wanphrut N."/>
            <person name="Wichels A."/>
            <person name="Zech H."/>
            <person name="Simon M."/>
        </authorList>
    </citation>
    <scope>NUCLEOTIDE SEQUENCE [LARGE SCALE GENOMIC DNA]</scope>
    <source>
        <strain>DSM 16493 / NCIMB 14021 / DFL 12</strain>
    </source>
</reference>
<sequence length="126" mass="14175">MGKDKNPRRVAENEAMAKTRMLRTSPQKLNLVAQMIRGKKVDKALADLTFSHKRIAVDVKKCLQSAIANAENNHGLDVDELIVAEAWVGKNLTMKRGRPRARGRFGKIIKPFAEITIKVRQVEEQA</sequence>
<organism>
    <name type="scientific">Dinoroseobacter shibae (strain DSM 16493 / NCIMB 14021 / DFL 12)</name>
    <dbReference type="NCBI Taxonomy" id="398580"/>
    <lineage>
        <taxon>Bacteria</taxon>
        <taxon>Pseudomonadati</taxon>
        <taxon>Pseudomonadota</taxon>
        <taxon>Alphaproteobacteria</taxon>
        <taxon>Rhodobacterales</taxon>
        <taxon>Roseobacteraceae</taxon>
        <taxon>Dinoroseobacter</taxon>
    </lineage>
</organism>
<comment type="function">
    <text evidence="1">This protein binds specifically to 23S rRNA; its binding is stimulated by other ribosomal proteins, e.g. L4, L17, and L20. It is important during the early stages of 50S assembly. It makes multiple contacts with different domains of the 23S rRNA in the assembled 50S subunit and ribosome (By similarity).</text>
</comment>
<comment type="function">
    <text evidence="1">The globular domain of the protein is located near the polypeptide exit tunnel on the outside of the subunit, while an extended beta-hairpin is found that lines the wall of the exit tunnel in the center of the 70S ribosome.</text>
</comment>
<comment type="subunit">
    <text evidence="1">Part of the 50S ribosomal subunit.</text>
</comment>
<comment type="similarity">
    <text evidence="1">Belongs to the universal ribosomal protein uL22 family.</text>
</comment>
<name>RL22_DINSH</name>
<proteinExistence type="inferred from homology"/>
<feature type="chain" id="PRO_1000086553" description="Large ribosomal subunit protein uL22">
    <location>
        <begin position="1"/>
        <end position="126"/>
    </location>
</feature>